<keyword id="KW-1185">Reference proteome</keyword>
<keyword id="KW-0687">Ribonucleoprotein</keyword>
<keyword id="KW-0689">Ribosomal protein</keyword>
<organism>
    <name type="scientific">Bdellovibrio bacteriovorus (strain ATCC 15356 / DSM 50701 / NCIMB 9529 / HD100)</name>
    <dbReference type="NCBI Taxonomy" id="264462"/>
    <lineage>
        <taxon>Bacteria</taxon>
        <taxon>Pseudomonadati</taxon>
        <taxon>Bdellovibrionota</taxon>
        <taxon>Bdellovibrionia</taxon>
        <taxon>Bdellovibrionales</taxon>
        <taxon>Pseudobdellovibrionaceae</taxon>
        <taxon>Bdellovibrio</taxon>
    </lineage>
</organism>
<comment type="function">
    <text evidence="1">Involved in the binding of tRNA to the ribosomes.</text>
</comment>
<comment type="subunit">
    <text evidence="1">Part of the 30S ribosomal subunit.</text>
</comment>
<comment type="similarity">
    <text evidence="1">Belongs to the universal ribosomal protein uS10 family.</text>
</comment>
<dbReference type="EMBL" id="BX842654">
    <property type="protein sequence ID" value="CAE80749.1"/>
    <property type="molecule type" value="Genomic_DNA"/>
</dbReference>
<dbReference type="RefSeq" id="WP_011165353.1">
    <property type="nucleotide sequence ID" value="NC_005363.1"/>
</dbReference>
<dbReference type="SMR" id="Q6MJ14"/>
<dbReference type="STRING" id="264462.Bd2978"/>
<dbReference type="GeneID" id="93013840"/>
<dbReference type="KEGG" id="bba:Bd2978"/>
<dbReference type="eggNOG" id="COG0051">
    <property type="taxonomic scope" value="Bacteria"/>
</dbReference>
<dbReference type="HOGENOM" id="CLU_122625_1_3_7"/>
<dbReference type="Proteomes" id="UP000008080">
    <property type="component" value="Chromosome"/>
</dbReference>
<dbReference type="GO" id="GO:1990904">
    <property type="term" value="C:ribonucleoprotein complex"/>
    <property type="evidence" value="ECO:0007669"/>
    <property type="project" value="UniProtKB-KW"/>
</dbReference>
<dbReference type="GO" id="GO:0005840">
    <property type="term" value="C:ribosome"/>
    <property type="evidence" value="ECO:0007669"/>
    <property type="project" value="UniProtKB-KW"/>
</dbReference>
<dbReference type="GO" id="GO:0003735">
    <property type="term" value="F:structural constituent of ribosome"/>
    <property type="evidence" value="ECO:0007669"/>
    <property type="project" value="InterPro"/>
</dbReference>
<dbReference type="GO" id="GO:0000049">
    <property type="term" value="F:tRNA binding"/>
    <property type="evidence" value="ECO:0007669"/>
    <property type="project" value="UniProtKB-UniRule"/>
</dbReference>
<dbReference type="GO" id="GO:0006412">
    <property type="term" value="P:translation"/>
    <property type="evidence" value="ECO:0007669"/>
    <property type="project" value="UniProtKB-UniRule"/>
</dbReference>
<dbReference type="FunFam" id="3.30.70.600:FF:000001">
    <property type="entry name" value="30S ribosomal protein S10"/>
    <property type="match status" value="1"/>
</dbReference>
<dbReference type="Gene3D" id="3.30.70.600">
    <property type="entry name" value="Ribosomal protein S10 domain"/>
    <property type="match status" value="1"/>
</dbReference>
<dbReference type="HAMAP" id="MF_00508">
    <property type="entry name" value="Ribosomal_uS10"/>
    <property type="match status" value="1"/>
</dbReference>
<dbReference type="InterPro" id="IPR001848">
    <property type="entry name" value="Ribosomal_uS10"/>
</dbReference>
<dbReference type="InterPro" id="IPR018268">
    <property type="entry name" value="Ribosomal_uS10_CS"/>
</dbReference>
<dbReference type="InterPro" id="IPR027486">
    <property type="entry name" value="Ribosomal_uS10_dom"/>
</dbReference>
<dbReference type="InterPro" id="IPR036838">
    <property type="entry name" value="Ribosomal_uS10_dom_sf"/>
</dbReference>
<dbReference type="NCBIfam" id="NF001861">
    <property type="entry name" value="PRK00596.1"/>
    <property type="match status" value="1"/>
</dbReference>
<dbReference type="NCBIfam" id="TIGR01049">
    <property type="entry name" value="rpsJ_bact"/>
    <property type="match status" value="1"/>
</dbReference>
<dbReference type="PANTHER" id="PTHR11700">
    <property type="entry name" value="30S RIBOSOMAL PROTEIN S10 FAMILY MEMBER"/>
    <property type="match status" value="1"/>
</dbReference>
<dbReference type="Pfam" id="PF00338">
    <property type="entry name" value="Ribosomal_S10"/>
    <property type="match status" value="1"/>
</dbReference>
<dbReference type="PRINTS" id="PR00971">
    <property type="entry name" value="RIBOSOMALS10"/>
</dbReference>
<dbReference type="SMART" id="SM01403">
    <property type="entry name" value="Ribosomal_S10"/>
    <property type="match status" value="1"/>
</dbReference>
<dbReference type="SUPFAM" id="SSF54999">
    <property type="entry name" value="Ribosomal protein S10"/>
    <property type="match status" value="1"/>
</dbReference>
<dbReference type="PROSITE" id="PS00361">
    <property type="entry name" value="RIBOSOMAL_S10"/>
    <property type="match status" value="1"/>
</dbReference>
<name>RS10_BDEBA</name>
<evidence type="ECO:0000255" key="1">
    <source>
        <dbReference type="HAMAP-Rule" id="MF_00508"/>
    </source>
</evidence>
<evidence type="ECO:0000305" key="2"/>
<gene>
    <name evidence="1" type="primary">rpsJ</name>
    <name type="ordered locus">Bd2978</name>
</gene>
<reference key="1">
    <citation type="journal article" date="2004" name="Science">
        <title>A predator unmasked: life cycle of Bdellovibrio bacteriovorus from a genomic perspective.</title>
        <authorList>
            <person name="Rendulic S."/>
            <person name="Jagtap P."/>
            <person name="Rosinus A."/>
            <person name="Eppinger M."/>
            <person name="Baar C."/>
            <person name="Lanz C."/>
            <person name="Keller H."/>
            <person name="Lambert C."/>
            <person name="Evans K.J."/>
            <person name="Goesmann A."/>
            <person name="Meyer F."/>
            <person name="Sockett R.E."/>
            <person name="Schuster S.C."/>
        </authorList>
    </citation>
    <scope>NUCLEOTIDE SEQUENCE [LARGE SCALE GENOMIC DNA]</scope>
    <source>
        <strain>ATCC 15356 / DSM 50701 / NCIMB 9529 / HD100</strain>
    </source>
</reference>
<sequence>MQSQKIRIRLKAFDHKLLDQSTKEIVETARRTGAKVAGPIPLPTRINRYTVLRSPHVDKKSREQFEVRTHKRMLDILEPTQQTVDQLMKLDLSAGVDVEIKLSAV</sequence>
<accession>Q6MJ14</accession>
<proteinExistence type="inferred from homology"/>
<protein>
    <recommendedName>
        <fullName evidence="1">Small ribosomal subunit protein uS10</fullName>
    </recommendedName>
    <alternativeName>
        <fullName evidence="2">30S ribosomal protein S10</fullName>
    </alternativeName>
</protein>
<feature type="chain" id="PRO_0000146499" description="Small ribosomal subunit protein uS10">
    <location>
        <begin position="1"/>
        <end position="105"/>
    </location>
</feature>